<protein>
    <recommendedName>
        <fullName evidence="1">NAD(P)H-quinone oxidoreductase subunit 2, chloroplastic</fullName>
        <ecNumber evidence="1">7.1.1.-</ecNumber>
    </recommendedName>
    <alternativeName>
        <fullName evidence="1">NAD(P)H dehydrogenase, subunit 2</fullName>
    </alternativeName>
    <alternativeName>
        <fullName evidence="1">NADH-plastoquinone oxidoreductase subunit 2</fullName>
    </alternativeName>
</protein>
<comment type="function">
    <text evidence="1">NDH shuttles electrons from NAD(P)H:plastoquinone, via FMN and iron-sulfur (Fe-S) centers, to quinones in the photosynthetic chain and possibly in a chloroplast respiratory chain. The immediate electron acceptor for the enzyme in this species is believed to be plastoquinone. Couples the redox reaction to proton translocation, and thus conserves the redox energy in a proton gradient.</text>
</comment>
<comment type="catalytic activity">
    <reaction evidence="1">
        <text>a plastoquinone + NADH + (n+1) H(+)(in) = a plastoquinol + NAD(+) + n H(+)(out)</text>
        <dbReference type="Rhea" id="RHEA:42608"/>
        <dbReference type="Rhea" id="RHEA-COMP:9561"/>
        <dbReference type="Rhea" id="RHEA-COMP:9562"/>
        <dbReference type="ChEBI" id="CHEBI:15378"/>
        <dbReference type="ChEBI" id="CHEBI:17757"/>
        <dbReference type="ChEBI" id="CHEBI:57540"/>
        <dbReference type="ChEBI" id="CHEBI:57945"/>
        <dbReference type="ChEBI" id="CHEBI:62192"/>
    </reaction>
</comment>
<comment type="catalytic activity">
    <reaction evidence="1">
        <text>a plastoquinone + NADPH + (n+1) H(+)(in) = a plastoquinol + NADP(+) + n H(+)(out)</text>
        <dbReference type="Rhea" id="RHEA:42612"/>
        <dbReference type="Rhea" id="RHEA-COMP:9561"/>
        <dbReference type="Rhea" id="RHEA-COMP:9562"/>
        <dbReference type="ChEBI" id="CHEBI:15378"/>
        <dbReference type="ChEBI" id="CHEBI:17757"/>
        <dbReference type="ChEBI" id="CHEBI:57783"/>
        <dbReference type="ChEBI" id="CHEBI:58349"/>
        <dbReference type="ChEBI" id="CHEBI:62192"/>
    </reaction>
</comment>
<comment type="subunit">
    <text evidence="1">NDH is composed of at least 16 different subunits, 5 of which are encoded in the nucleus.</text>
</comment>
<comment type="subcellular location">
    <subcellularLocation>
        <location evidence="1">Plastid</location>
        <location evidence="1">Chloroplast thylakoid membrane</location>
        <topology evidence="1">Multi-pass membrane protein</topology>
    </subcellularLocation>
</comment>
<comment type="similarity">
    <text evidence="1">Belongs to the complex I subunit 2 family.</text>
</comment>
<comment type="sequence caution" evidence="2">
    <conflict type="erroneous initiation">
        <sequence resource="EMBL-CDS" id="AAN31986"/>
    </conflict>
</comment>
<name>NU2C_ANACO</name>
<feature type="chain" id="PRO_0000117653" description="NAD(P)H-quinone oxidoreductase subunit 2, chloroplastic">
    <location>
        <begin position="1"/>
        <end position="510"/>
    </location>
</feature>
<feature type="transmembrane region" description="Helical" evidence="1">
    <location>
        <begin position="24"/>
        <end position="44"/>
    </location>
</feature>
<feature type="transmembrane region" description="Helical" evidence="1">
    <location>
        <begin position="59"/>
        <end position="79"/>
    </location>
</feature>
<feature type="transmembrane region" description="Helical" evidence="1">
    <location>
        <begin position="99"/>
        <end position="119"/>
    </location>
</feature>
<feature type="transmembrane region" description="Helical" evidence="1">
    <location>
        <begin position="124"/>
        <end position="144"/>
    </location>
</feature>
<feature type="transmembrane region" description="Helical" evidence="1">
    <location>
        <begin position="149"/>
        <end position="169"/>
    </location>
</feature>
<feature type="transmembrane region" description="Helical" evidence="1">
    <location>
        <begin position="183"/>
        <end position="203"/>
    </location>
</feature>
<feature type="transmembrane region" description="Helical" evidence="1">
    <location>
        <begin position="229"/>
        <end position="249"/>
    </location>
</feature>
<feature type="transmembrane region" description="Helical" evidence="1">
    <location>
        <begin position="295"/>
        <end position="315"/>
    </location>
</feature>
<feature type="transmembrane region" description="Helical" evidence="1">
    <location>
        <begin position="323"/>
        <end position="343"/>
    </location>
</feature>
<feature type="transmembrane region" description="Helical" evidence="1">
    <location>
        <begin position="354"/>
        <end position="374"/>
    </location>
</feature>
<feature type="transmembrane region" description="Helical" evidence="1">
    <location>
        <begin position="395"/>
        <end position="415"/>
    </location>
</feature>
<feature type="transmembrane region" description="Helical" evidence="1">
    <location>
        <begin position="418"/>
        <end position="438"/>
    </location>
</feature>
<sequence length="510" mass="56816">MIWHVQNENFILDSTRIFMKAFHLLLFHGSFIFPECILIFGLILLLMIDSTSDQKDRPWFYFISSTSLVISITALLFRWREEPIISFSGNFQTNNFNEIFQFLILLCSTLCIPLSVEYIECTEMAITEFLLFVLTATLGGMFLCGANDLITIFVAPECFSLCSYLLSGYTKRDVRSNEATMKYLLMGGASSSILVHGFSWLYGSSGGEIELQEIVNGLINTQMYNSPGISIALIFITVGIGFKLSPAPFHQWTPDVYEGSPTPVVAFLSVTSKVAASASATRIFDIPFYFSSNEWHLLLEILAILSMILGNLIAITQTSMKRMLAYSSIGQIGYVIIGIIVGDSNDGYASMITYMLFYISMNLGTFACIVLFGLRTGTDNIRDYAGLYTKDPFLALSSALCLLSLGGLPPLAGFFGKLYLFWCGWQAGLYFLVSIGLLTSVVSIYYYLKIIKLLMTGRNQEITPYVRNYRRSPLRSNNSIELSMTVCVIASTIPGISMNPILAIAQDXLF</sequence>
<dbReference type="EC" id="7.1.1.-" evidence="1"/>
<dbReference type="EMBL" id="AY147458">
    <property type="protein sequence ID" value="AAN31986.1"/>
    <property type="status" value="ALT_INIT"/>
    <property type="molecule type" value="Genomic_DNA"/>
</dbReference>
<dbReference type="Proteomes" id="UP000515123">
    <property type="component" value="Unplaced"/>
</dbReference>
<dbReference type="GO" id="GO:0009535">
    <property type="term" value="C:chloroplast thylakoid membrane"/>
    <property type="evidence" value="ECO:0007669"/>
    <property type="project" value="UniProtKB-SubCell"/>
</dbReference>
<dbReference type="GO" id="GO:0008137">
    <property type="term" value="F:NADH dehydrogenase (ubiquinone) activity"/>
    <property type="evidence" value="ECO:0007669"/>
    <property type="project" value="InterPro"/>
</dbReference>
<dbReference type="GO" id="GO:0048038">
    <property type="term" value="F:quinone binding"/>
    <property type="evidence" value="ECO:0007669"/>
    <property type="project" value="UniProtKB-KW"/>
</dbReference>
<dbReference type="GO" id="GO:0042773">
    <property type="term" value="P:ATP synthesis coupled electron transport"/>
    <property type="evidence" value="ECO:0007669"/>
    <property type="project" value="InterPro"/>
</dbReference>
<dbReference type="GO" id="GO:0019684">
    <property type="term" value="P:photosynthesis, light reaction"/>
    <property type="evidence" value="ECO:0007669"/>
    <property type="project" value="UniProtKB-UniRule"/>
</dbReference>
<dbReference type="HAMAP" id="MF_00445">
    <property type="entry name" value="NDH1_NuoN_1"/>
    <property type="match status" value="1"/>
</dbReference>
<dbReference type="InterPro" id="IPR010096">
    <property type="entry name" value="NADH-Q_OxRdtase_suN/2"/>
</dbReference>
<dbReference type="InterPro" id="IPR001750">
    <property type="entry name" value="ND/Mrp_TM"/>
</dbReference>
<dbReference type="InterPro" id="IPR045693">
    <property type="entry name" value="Ndh2_N"/>
</dbReference>
<dbReference type="NCBIfam" id="TIGR01770">
    <property type="entry name" value="NDH_I_N"/>
    <property type="match status" value="1"/>
</dbReference>
<dbReference type="NCBIfam" id="NF002701">
    <property type="entry name" value="PRK02504.1"/>
    <property type="match status" value="1"/>
</dbReference>
<dbReference type="PANTHER" id="PTHR22773">
    <property type="entry name" value="NADH DEHYDROGENASE"/>
    <property type="match status" value="1"/>
</dbReference>
<dbReference type="Pfam" id="PF19530">
    <property type="entry name" value="Ndh2_N"/>
    <property type="match status" value="1"/>
</dbReference>
<dbReference type="Pfam" id="PF00361">
    <property type="entry name" value="Proton_antipo_M"/>
    <property type="match status" value="1"/>
</dbReference>
<dbReference type="PRINTS" id="PR01434">
    <property type="entry name" value="NADHDHGNASE5"/>
</dbReference>
<evidence type="ECO:0000255" key="1">
    <source>
        <dbReference type="HAMAP-Rule" id="MF_00445"/>
    </source>
</evidence>
<evidence type="ECO:0000305" key="2"/>
<proteinExistence type="inferred from homology"/>
<reference key="1">
    <citation type="submission" date="2002-09" db="EMBL/GenBank/DDBJ databases">
        <title>Phylogenetic relationships among the major lineages of Asparagales based on a large chloroplast data set.</title>
        <authorList>
            <person name="McPherson M.A."/>
            <person name="Rai H.S."/>
            <person name="Wong W.A."/>
            <person name="Graham S.W."/>
        </authorList>
    </citation>
    <scope>NUCLEOTIDE SEQUENCE [GENOMIC DNA]</scope>
</reference>
<geneLocation type="chloroplast"/>
<keyword id="KW-0150">Chloroplast</keyword>
<keyword id="KW-0472">Membrane</keyword>
<keyword id="KW-0520">NAD</keyword>
<keyword id="KW-0521">NADP</keyword>
<keyword id="KW-0934">Plastid</keyword>
<keyword id="KW-0618">Plastoquinone</keyword>
<keyword id="KW-0874">Quinone</keyword>
<keyword id="KW-0793">Thylakoid</keyword>
<keyword id="KW-1278">Translocase</keyword>
<keyword id="KW-0812">Transmembrane</keyword>
<keyword id="KW-1133">Transmembrane helix</keyword>
<keyword id="KW-0813">Transport</keyword>
<accession>Q67IL7</accession>
<organism>
    <name type="scientific">Ananas comosus</name>
    <name type="common">Pineapple</name>
    <name type="synonym">Ananas ananas</name>
    <dbReference type="NCBI Taxonomy" id="4615"/>
    <lineage>
        <taxon>Eukaryota</taxon>
        <taxon>Viridiplantae</taxon>
        <taxon>Streptophyta</taxon>
        <taxon>Embryophyta</taxon>
        <taxon>Tracheophyta</taxon>
        <taxon>Spermatophyta</taxon>
        <taxon>Magnoliopsida</taxon>
        <taxon>Liliopsida</taxon>
        <taxon>Poales</taxon>
        <taxon>Bromeliaceae</taxon>
        <taxon>Bromelioideae</taxon>
        <taxon>Ananas</taxon>
    </lineage>
</organism>
<gene>
    <name evidence="1" type="primary">ndhB</name>
</gene>